<keyword id="KW-0414">Isoprene biosynthesis</keyword>
<keyword id="KW-0548">Nucleotidyltransferase</keyword>
<keyword id="KW-0808">Transferase</keyword>
<accession>A6LPN9</accession>
<gene>
    <name evidence="1" type="primary">ispD</name>
    <name type="ordered locus">Cbei_0129</name>
</gene>
<comment type="function">
    <text evidence="1">Catalyzes the formation of 4-diphosphocytidyl-2-C-methyl-D-erythritol from CTP and 2-C-methyl-D-erythritol 4-phosphate (MEP).</text>
</comment>
<comment type="catalytic activity">
    <reaction evidence="1">
        <text>2-C-methyl-D-erythritol 4-phosphate + CTP + H(+) = 4-CDP-2-C-methyl-D-erythritol + diphosphate</text>
        <dbReference type="Rhea" id="RHEA:13429"/>
        <dbReference type="ChEBI" id="CHEBI:15378"/>
        <dbReference type="ChEBI" id="CHEBI:33019"/>
        <dbReference type="ChEBI" id="CHEBI:37563"/>
        <dbReference type="ChEBI" id="CHEBI:57823"/>
        <dbReference type="ChEBI" id="CHEBI:58262"/>
        <dbReference type="EC" id="2.7.7.60"/>
    </reaction>
</comment>
<comment type="pathway">
    <text evidence="1">Isoprenoid biosynthesis; isopentenyl diphosphate biosynthesis via DXP pathway; isopentenyl diphosphate from 1-deoxy-D-xylulose 5-phosphate: step 2/6.</text>
</comment>
<comment type="similarity">
    <text evidence="1">Belongs to the IspD/TarI cytidylyltransferase family. IspD subfamily.</text>
</comment>
<organism>
    <name type="scientific">Clostridium beijerinckii (strain ATCC 51743 / NCIMB 8052)</name>
    <name type="common">Clostridium acetobutylicum</name>
    <dbReference type="NCBI Taxonomy" id="290402"/>
    <lineage>
        <taxon>Bacteria</taxon>
        <taxon>Bacillati</taxon>
        <taxon>Bacillota</taxon>
        <taxon>Clostridia</taxon>
        <taxon>Eubacteriales</taxon>
        <taxon>Clostridiaceae</taxon>
        <taxon>Clostridium</taxon>
    </lineage>
</organism>
<evidence type="ECO:0000255" key="1">
    <source>
        <dbReference type="HAMAP-Rule" id="MF_00108"/>
    </source>
</evidence>
<sequence>MVSAIVLAGGRGKRMGNIQSKQYIDLNGAPILYYTLKQFIENDLIDKIILVVPEDEKDYCKREVLNKYGLKIDDLVSGGNERQESVYNALEKLEKSDIVLIHDGARPFVSQKIINYAVEYAKRYKAAAPGVMPKDTIKIKDSNNFSVDTLVRSELVAIQTPQAFDFNLIYECHKEIKKRCISVTDDTSVVELLGHKVYIYEGDYKNIKITTPEDLILAEYFVKNIV</sequence>
<dbReference type="EC" id="2.7.7.60" evidence="1"/>
<dbReference type="EMBL" id="CP000721">
    <property type="protein sequence ID" value="ABR32319.1"/>
    <property type="molecule type" value="Genomic_DNA"/>
</dbReference>
<dbReference type="RefSeq" id="WP_011967492.1">
    <property type="nucleotide sequence ID" value="NC_009617.1"/>
</dbReference>
<dbReference type="SMR" id="A6LPN9"/>
<dbReference type="KEGG" id="cbe:Cbei_0129"/>
<dbReference type="eggNOG" id="COG1211">
    <property type="taxonomic scope" value="Bacteria"/>
</dbReference>
<dbReference type="HOGENOM" id="CLU_061281_2_2_9"/>
<dbReference type="UniPathway" id="UPA00056">
    <property type="reaction ID" value="UER00093"/>
</dbReference>
<dbReference type="Proteomes" id="UP000000565">
    <property type="component" value="Chromosome"/>
</dbReference>
<dbReference type="GO" id="GO:0050518">
    <property type="term" value="F:2-C-methyl-D-erythritol 4-phosphate cytidylyltransferase activity"/>
    <property type="evidence" value="ECO:0007669"/>
    <property type="project" value="UniProtKB-UniRule"/>
</dbReference>
<dbReference type="GO" id="GO:0019288">
    <property type="term" value="P:isopentenyl diphosphate biosynthetic process, methylerythritol 4-phosphate pathway"/>
    <property type="evidence" value="ECO:0007669"/>
    <property type="project" value="UniProtKB-UniRule"/>
</dbReference>
<dbReference type="CDD" id="cd02516">
    <property type="entry name" value="CDP-ME_synthetase"/>
    <property type="match status" value="1"/>
</dbReference>
<dbReference type="FunFam" id="3.90.550.10:FF:000003">
    <property type="entry name" value="2-C-methyl-D-erythritol 4-phosphate cytidylyltransferase"/>
    <property type="match status" value="1"/>
</dbReference>
<dbReference type="Gene3D" id="3.90.550.10">
    <property type="entry name" value="Spore Coat Polysaccharide Biosynthesis Protein SpsA, Chain A"/>
    <property type="match status" value="1"/>
</dbReference>
<dbReference type="HAMAP" id="MF_00108">
    <property type="entry name" value="IspD"/>
    <property type="match status" value="1"/>
</dbReference>
<dbReference type="InterPro" id="IPR001228">
    <property type="entry name" value="IspD"/>
</dbReference>
<dbReference type="InterPro" id="IPR034683">
    <property type="entry name" value="IspD/TarI"/>
</dbReference>
<dbReference type="InterPro" id="IPR050088">
    <property type="entry name" value="IspD/TarI_cytidylyltransf_bact"/>
</dbReference>
<dbReference type="InterPro" id="IPR018294">
    <property type="entry name" value="ISPD_synthase_CS"/>
</dbReference>
<dbReference type="InterPro" id="IPR029044">
    <property type="entry name" value="Nucleotide-diphossugar_trans"/>
</dbReference>
<dbReference type="NCBIfam" id="TIGR00453">
    <property type="entry name" value="ispD"/>
    <property type="match status" value="1"/>
</dbReference>
<dbReference type="PANTHER" id="PTHR32125">
    <property type="entry name" value="2-C-METHYL-D-ERYTHRITOL 4-PHOSPHATE CYTIDYLYLTRANSFERASE, CHLOROPLASTIC"/>
    <property type="match status" value="1"/>
</dbReference>
<dbReference type="PANTHER" id="PTHR32125:SF4">
    <property type="entry name" value="2-C-METHYL-D-ERYTHRITOL 4-PHOSPHATE CYTIDYLYLTRANSFERASE, CHLOROPLASTIC"/>
    <property type="match status" value="1"/>
</dbReference>
<dbReference type="Pfam" id="PF01128">
    <property type="entry name" value="IspD"/>
    <property type="match status" value="1"/>
</dbReference>
<dbReference type="SUPFAM" id="SSF53448">
    <property type="entry name" value="Nucleotide-diphospho-sugar transferases"/>
    <property type="match status" value="1"/>
</dbReference>
<dbReference type="PROSITE" id="PS01295">
    <property type="entry name" value="ISPD"/>
    <property type="match status" value="1"/>
</dbReference>
<feature type="chain" id="PRO_1000191051" description="2-C-methyl-D-erythritol 4-phosphate cytidylyltransferase">
    <location>
        <begin position="1"/>
        <end position="226"/>
    </location>
</feature>
<feature type="site" description="Transition state stabilizer" evidence="1">
    <location>
        <position position="14"/>
    </location>
</feature>
<feature type="site" description="Transition state stabilizer" evidence="1">
    <location>
        <position position="21"/>
    </location>
</feature>
<feature type="site" description="Positions MEP for the nucleophilic attack" evidence="1">
    <location>
        <position position="152"/>
    </location>
</feature>
<feature type="site" description="Positions MEP for the nucleophilic attack" evidence="1">
    <location>
        <position position="208"/>
    </location>
</feature>
<protein>
    <recommendedName>
        <fullName evidence="1">2-C-methyl-D-erythritol 4-phosphate cytidylyltransferase</fullName>
        <ecNumber evidence="1">2.7.7.60</ecNumber>
    </recommendedName>
    <alternativeName>
        <fullName evidence="1">4-diphosphocytidyl-2C-methyl-D-erythritol synthase</fullName>
    </alternativeName>
    <alternativeName>
        <fullName evidence="1">MEP cytidylyltransferase</fullName>
        <shortName evidence="1">MCT</shortName>
    </alternativeName>
</protein>
<reference key="1">
    <citation type="submission" date="2007-06" db="EMBL/GenBank/DDBJ databases">
        <title>Complete sequence of Clostridium beijerinckii NCIMB 8052.</title>
        <authorList>
            <consortium name="US DOE Joint Genome Institute"/>
            <person name="Copeland A."/>
            <person name="Lucas S."/>
            <person name="Lapidus A."/>
            <person name="Barry K."/>
            <person name="Detter J.C."/>
            <person name="Glavina del Rio T."/>
            <person name="Hammon N."/>
            <person name="Israni S."/>
            <person name="Dalin E."/>
            <person name="Tice H."/>
            <person name="Pitluck S."/>
            <person name="Sims D."/>
            <person name="Brettin T."/>
            <person name="Bruce D."/>
            <person name="Tapia R."/>
            <person name="Brainard J."/>
            <person name="Schmutz J."/>
            <person name="Larimer F."/>
            <person name="Land M."/>
            <person name="Hauser L."/>
            <person name="Kyrpides N."/>
            <person name="Mikhailova N."/>
            <person name="Bennet G."/>
            <person name="Cann I."/>
            <person name="Chen J.-S."/>
            <person name="Contreras A.L."/>
            <person name="Jones D."/>
            <person name="Kashket E."/>
            <person name="Mitchell W."/>
            <person name="Stoddard S."/>
            <person name="Schwarz W."/>
            <person name="Qureshi N."/>
            <person name="Young M."/>
            <person name="Shi Z."/>
            <person name="Ezeji T."/>
            <person name="White B."/>
            <person name="Blaschek H."/>
            <person name="Richardson P."/>
        </authorList>
    </citation>
    <scope>NUCLEOTIDE SEQUENCE [LARGE SCALE GENOMIC DNA]</scope>
    <source>
        <strain>ATCC 51743 / NCIMB 8052</strain>
    </source>
</reference>
<name>ISPD_CLOB8</name>
<proteinExistence type="inferred from homology"/>